<comment type="function">
    <text>Regulator of G protein-coupled receptor (GPCR) signaling. Probably acts by regulating the activity of some 'R7' family protein (RGS6, RGS7, RGS9 and/or RGS11).</text>
</comment>
<comment type="similarity">
    <text evidence="3">Belongs to the RGS7BP/RGS9BP family.</text>
</comment>
<accession>Q5M8K0</accession>
<gene>
    <name type="primary">rgs9bp</name>
</gene>
<feature type="chain" id="PRO_0000287593" description="Regulator of G-protein signaling 9-binding protein">
    <location>
        <begin position="1"/>
        <end position="265"/>
    </location>
</feature>
<feature type="region of interest" description="Disordered" evidence="2">
    <location>
        <begin position="1"/>
        <end position="37"/>
    </location>
</feature>
<feature type="region of interest" description="Disordered" evidence="2">
    <location>
        <begin position="168"/>
        <end position="187"/>
    </location>
</feature>
<feature type="coiled-coil region" evidence="1">
    <location>
        <begin position="70"/>
        <end position="92"/>
    </location>
</feature>
<feature type="compositionally biased region" description="Basic and acidic residues" evidence="2">
    <location>
        <begin position="174"/>
        <end position="186"/>
    </location>
</feature>
<sequence>MAAPEVSSAGPNMLHPNSRTLTLRGKRGHAAEDSSQGAVSDCKKMHSSLNKVTACYRQLVLCVGGTSDCTRLREELEESRKKAFDLSTDLSNTLMVLLMNEGVSQEDRVELERIWVLFLSTLEFFQQDLCKAHHLCQLFPLHGRRKRLVNTGVIGKTSEVAYRARNIKSPSSSRMHENQQRTERPCSPDLAGQIEHMERMLHDMQMKVSIPIWTVEATEEAWAEVASTCDLDECSDNEILAGEDITSRGCCAHGQSLPGPLCMVS</sequence>
<evidence type="ECO:0000255" key="1"/>
<evidence type="ECO:0000256" key="2">
    <source>
        <dbReference type="SAM" id="MobiDB-lite"/>
    </source>
</evidence>
<evidence type="ECO:0000305" key="3"/>
<proteinExistence type="evidence at transcript level"/>
<organism>
    <name type="scientific">Xenopus tropicalis</name>
    <name type="common">Western clawed frog</name>
    <name type="synonym">Silurana tropicalis</name>
    <dbReference type="NCBI Taxonomy" id="8364"/>
    <lineage>
        <taxon>Eukaryota</taxon>
        <taxon>Metazoa</taxon>
        <taxon>Chordata</taxon>
        <taxon>Craniata</taxon>
        <taxon>Vertebrata</taxon>
        <taxon>Euteleostomi</taxon>
        <taxon>Amphibia</taxon>
        <taxon>Batrachia</taxon>
        <taxon>Anura</taxon>
        <taxon>Pipoidea</taxon>
        <taxon>Pipidae</taxon>
        <taxon>Xenopodinae</taxon>
        <taxon>Xenopus</taxon>
        <taxon>Silurana</taxon>
    </lineage>
</organism>
<reference key="1">
    <citation type="submission" date="2004-12" db="EMBL/GenBank/DDBJ databases">
        <authorList>
            <consortium name="NIH - Xenopus Gene Collection (XGC) project"/>
        </authorList>
    </citation>
    <scope>NUCLEOTIDE SEQUENCE [LARGE SCALE MRNA]</scope>
</reference>
<dbReference type="EMBL" id="BC087990">
    <property type="protein sequence ID" value="AAH87990.1"/>
    <property type="molecule type" value="mRNA"/>
</dbReference>
<dbReference type="RefSeq" id="NP_001011277.1">
    <property type="nucleotide sequence ID" value="NM_001011277.1"/>
</dbReference>
<dbReference type="SMR" id="Q5M8K0"/>
<dbReference type="PaxDb" id="8364-ENSXETP00000032548"/>
<dbReference type="DNASU" id="496730"/>
<dbReference type="GeneID" id="496730"/>
<dbReference type="KEGG" id="xtr:496730"/>
<dbReference type="AGR" id="Xenbase:XB-GENE-5936529"/>
<dbReference type="CTD" id="496730"/>
<dbReference type="Xenbase" id="XB-GENE-5936529">
    <property type="gene designation" value="rgs9bpl"/>
</dbReference>
<dbReference type="eggNOG" id="ENOG502RXQ0">
    <property type="taxonomic scope" value="Eukaryota"/>
</dbReference>
<dbReference type="HOGENOM" id="CLU_093021_0_0_1"/>
<dbReference type="InParanoid" id="Q5M8K0"/>
<dbReference type="OMA" id="ICTGLHR"/>
<dbReference type="OrthoDB" id="6358515at2759"/>
<dbReference type="PhylomeDB" id="Q5M8K0"/>
<dbReference type="TreeFam" id="TF331562"/>
<dbReference type="Proteomes" id="UP000008143">
    <property type="component" value="Chromosome 10"/>
</dbReference>
<dbReference type="Bgee" id="ENSXETG00000014880">
    <property type="expression patterns" value="Expressed in brain and 13 other cell types or tissues"/>
</dbReference>
<dbReference type="GO" id="GO:0009968">
    <property type="term" value="P:negative regulation of signal transduction"/>
    <property type="evidence" value="ECO:0007669"/>
    <property type="project" value="UniProtKB-KW"/>
</dbReference>
<dbReference type="InterPro" id="IPR026512">
    <property type="entry name" value="RGS7BP/RGS9BP"/>
</dbReference>
<dbReference type="PANTHER" id="PTHR21029">
    <property type="entry name" value="R-SEVEN BINDING PROTEIN (R7BP) HOMOLOG"/>
    <property type="match status" value="1"/>
</dbReference>
<protein>
    <recommendedName>
        <fullName>Regulator of G-protein signaling 9-binding protein</fullName>
    </recommendedName>
    <alternativeName>
        <fullName>RGS9-anchoring protein</fullName>
    </alternativeName>
</protein>
<name>R9BP_XENTR</name>
<keyword id="KW-0175">Coiled coil</keyword>
<keyword id="KW-1185">Reference proteome</keyword>
<keyword id="KW-0734">Signal transduction inhibitor</keyword>